<protein>
    <recommendedName>
        <fullName>Proteasome subunit beta type-6</fullName>
        <ecNumber>3.4.25.1</ecNumber>
    </recommendedName>
    <alternativeName>
        <fullName>Differentiation-associated proteasome subunit 1</fullName>
        <shortName>DAPS-1</shortName>
    </alternativeName>
</protein>
<dbReference type="EC" id="3.4.25.1"/>
<dbReference type="EMBL" id="AB007024">
    <property type="protein sequence ID" value="BAA25923.1"/>
    <property type="molecule type" value="mRNA"/>
</dbReference>
<dbReference type="EMBL" id="AAFI02000003">
    <property type="protein sequence ID" value="EAL73147.1"/>
    <property type="molecule type" value="Genomic_DNA"/>
</dbReference>
<dbReference type="PIR" id="JE0101">
    <property type="entry name" value="JE0101"/>
</dbReference>
<dbReference type="RefSeq" id="XP_647188.1">
    <property type="nucleotide sequence ID" value="XM_642096.1"/>
</dbReference>
<dbReference type="SMR" id="Q55GJ6"/>
<dbReference type="FunCoup" id="Q55GJ6">
    <property type="interactions" value="1148"/>
</dbReference>
<dbReference type="STRING" id="44689.Q55GJ6"/>
<dbReference type="MEROPS" id="T01.010"/>
<dbReference type="PaxDb" id="44689-DDB0191199"/>
<dbReference type="EnsemblProtists" id="EAL73147">
    <property type="protein sequence ID" value="EAL73147"/>
    <property type="gene ID" value="DDB_G0267390"/>
</dbReference>
<dbReference type="GeneID" id="8615992"/>
<dbReference type="KEGG" id="ddi:DDB_G0267390"/>
<dbReference type="dictyBase" id="DDB_G0267390">
    <property type="gene designation" value="psmB6"/>
</dbReference>
<dbReference type="VEuPathDB" id="AmoebaDB:DDB_G0267390"/>
<dbReference type="eggNOG" id="KOG0174">
    <property type="taxonomic scope" value="Eukaryota"/>
</dbReference>
<dbReference type="HOGENOM" id="CLU_035750_5_2_1"/>
<dbReference type="InParanoid" id="Q55GJ6"/>
<dbReference type="OMA" id="TFIYGYC"/>
<dbReference type="PhylomeDB" id="Q55GJ6"/>
<dbReference type="Reactome" id="R-DDI-1236978">
    <property type="pathway name" value="Cross-presentation of soluble exogenous antigens (endosomes)"/>
</dbReference>
<dbReference type="Reactome" id="R-DDI-174084">
    <property type="pathway name" value="Autodegradation of Cdh1 by Cdh1:APC/C"/>
</dbReference>
<dbReference type="Reactome" id="R-DDI-174154">
    <property type="pathway name" value="APC/C:Cdc20 mediated degradation of Securin"/>
</dbReference>
<dbReference type="Reactome" id="R-DDI-174178">
    <property type="pathway name" value="APC/C:Cdh1 mediated degradation of Cdc20 and other APC/C:Cdh1 targeted proteins in late mitosis/early G1"/>
</dbReference>
<dbReference type="Reactome" id="R-DDI-2467813">
    <property type="pathway name" value="Separation of Sister Chromatids"/>
</dbReference>
<dbReference type="Reactome" id="R-DDI-349425">
    <property type="pathway name" value="Autodegradation of the E3 ubiquitin ligase COP1"/>
</dbReference>
<dbReference type="Reactome" id="R-DDI-382556">
    <property type="pathway name" value="ABC-family proteins mediated transport"/>
</dbReference>
<dbReference type="Reactome" id="R-DDI-450408">
    <property type="pathway name" value="AUF1 (hnRNP D0) binds and destabilizes mRNA"/>
</dbReference>
<dbReference type="Reactome" id="R-DDI-4641258">
    <property type="pathway name" value="Degradation of DVL"/>
</dbReference>
<dbReference type="Reactome" id="R-DDI-5632684">
    <property type="pathway name" value="Hedgehog 'on' state"/>
</dbReference>
<dbReference type="Reactome" id="R-DDI-5658442">
    <property type="pathway name" value="Regulation of RAS by GAPs"/>
</dbReference>
<dbReference type="Reactome" id="R-DDI-5687128">
    <property type="pathway name" value="MAPK6/MAPK4 signaling"/>
</dbReference>
<dbReference type="Reactome" id="R-DDI-5689603">
    <property type="pathway name" value="UCH proteinases"/>
</dbReference>
<dbReference type="Reactome" id="R-DDI-5689880">
    <property type="pathway name" value="Ub-specific processing proteases"/>
</dbReference>
<dbReference type="Reactome" id="R-DDI-68949">
    <property type="pathway name" value="Orc1 removal from chromatin"/>
</dbReference>
<dbReference type="Reactome" id="R-DDI-69017">
    <property type="pathway name" value="CDK-mediated phosphorylation and removal of Cdc6"/>
</dbReference>
<dbReference type="Reactome" id="R-DDI-69601">
    <property type="pathway name" value="Ubiquitin Mediated Degradation of Phosphorylated Cdc25A"/>
</dbReference>
<dbReference type="Reactome" id="R-DDI-8854050">
    <property type="pathway name" value="FBXL7 down-regulates AURKA during mitotic entry and in early mitosis"/>
</dbReference>
<dbReference type="Reactome" id="R-DDI-8948751">
    <property type="pathway name" value="Regulation of PTEN stability and activity"/>
</dbReference>
<dbReference type="Reactome" id="R-DDI-8951664">
    <property type="pathway name" value="Neddylation"/>
</dbReference>
<dbReference type="Reactome" id="R-DDI-9755511">
    <property type="pathway name" value="KEAP1-NFE2L2 pathway"/>
</dbReference>
<dbReference type="Reactome" id="R-DDI-983168">
    <property type="pathway name" value="Antigen processing: Ubiquitination &amp; Proteasome degradation"/>
</dbReference>
<dbReference type="Reactome" id="R-DDI-9907900">
    <property type="pathway name" value="Proteasome assembly"/>
</dbReference>
<dbReference type="PRO" id="PR:Q55GJ6"/>
<dbReference type="Proteomes" id="UP000002195">
    <property type="component" value="Chromosome 1"/>
</dbReference>
<dbReference type="GO" id="GO:0005737">
    <property type="term" value="C:cytoplasm"/>
    <property type="evidence" value="ECO:0000353"/>
    <property type="project" value="dictyBase"/>
</dbReference>
<dbReference type="GO" id="GO:0005829">
    <property type="term" value="C:cytosol"/>
    <property type="evidence" value="ECO:0000318"/>
    <property type="project" value="GO_Central"/>
</dbReference>
<dbReference type="GO" id="GO:0005634">
    <property type="term" value="C:nucleus"/>
    <property type="evidence" value="ECO:0000353"/>
    <property type="project" value="dictyBase"/>
</dbReference>
<dbReference type="GO" id="GO:0019774">
    <property type="term" value="C:proteasome core complex, beta-subunit complex"/>
    <property type="evidence" value="ECO:0000314"/>
    <property type="project" value="dictyBase"/>
</dbReference>
<dbReference type="GO" id="GO:0004175">
    <property type="term" value="F:endopeptidase activity"/>
    <property type="evidence" value="ECO:0000314"/>
    <property type="project" value="dictyBase"/>
</dbReference>
<dbReference type="GO" id="GO:0004298">
    <property type="term" value="F:threonine-type endopeptidase activity"/>
    <property type="evidence" value="ECO:0007669"/>
    <property type="project" value="UniProtKB-KW"/>
</dbReference>
<dbReference type="GO" id="GO:0010498">
    <property type="term" value="P:proteasomal protein catabolic process"/>
    <property type="evidence" value="ECO:0000314"/>
    <property type="project" value="dictyBase"/>
</dbReference>
<dbReference type="GO" id="GO:0043161">
    <property type="term" value="P:proteasome-mediated ubiquitin-dependent protein catabolic process"/>
    <property type="evidence" value="ECO:0000318"/>
    <property type="project" value="GO_Central"/>
</dbReference>
<dbReference type="CDD" id="cd03762">
    <property type="entry name" value="proteasome_beta_type_6"/>
    <property type="match status" value="1"/>
</dbReference>
<dbReference type="FunFam" id="3.60.20.10:FF:000010">
    <property type="entry name" value="Proteasome subunit beta type-1"/>
    <property type="match status" value="1"/>
</dbReference>
<dbReference type="Gene3D" id="3.60.20.10">
    <property type="entry name" value="Glutamine Phosphoribosylpyrophosphate, subunit 1, domain 1"/>
    <property type="match status" value="1"/>
</dbReference>
<dbReference type="InterPro" id="IPR029055">
    <property type="entry name" value="Ntn_hydrolases_N"/>
</dbReference>
<dbReference type="InterPro" id="IPR000243">
    <property type="entry name" value="Pept_T1A_subB"/>
</dbReference>
<dbReference type="InterPro" id="IPR016050">
    <property type="entry name" value="Proteasome_bsu_CS"/>
</dbReference>
<dbReference type="InterPro" id="IPR001353">
    <property type="entry name" value="Proteasome_sua/b"/>
</dbReference>
<dbReference type="InterPro" id="IPR023333">
    <property type="entry name" value="Proteasome_suB-type"/>
</dbReference>
<dbReference type="PANTHER" id="PTHR32194:SF0">
    <property type="entry name" value="ATP-DEPENDENT PROTEASE SUBUNIT HSLV"/>
    <property type="match status" value="1"/>
</dbReference>
<dbReference type="PANTHER" id="PTHR32194">
    <property type="entry name" value="METALLOPROTEASE TLDD"/>
    <property type="match status" value="1"/>
</dbReference>
<dbReference type="Pfam" id="PF00227">
    <property type="entry name" value="Proteasome"/>
    <property type="match status" value="1"/>
</dbReference>
<dbReference type="PRINTS" id="PR00141">
    <property type="entry name" value="PROTEASOME"/>
</dbReference>
<dbReference type="SUPFAM" id="SSF56235">
    <property type="entry name" value="N-terminal nucleophile aminohydrolases (Ntn hydrolases)"/>
    <property type="match status" value="1"/>
</dbReference>
<dbReference type="PROSITE" id="PS00854">
    <property type="entry name" value="PROTEASOME_BETA_1"/>
    <property type="match status" value="1"/>
</dbReference>
<dbReference type="PROSITE" id="PS51476">
    <property type="entry name" value="PROTEASOME_BETA_2"/>
    <property type="match status" value="1"/>
</dbReference>
<proteinExistence type="evidence at protein level"/>
<accession>Q55GJ6</accession>
<accession>O60953</accession>
<comment type="function">
    <text evidence="3">The proteasome is a multicatalytic proteinase complex which is characterized by its ability to cleave peptides with Arg, Phe, Tyr, Leu, and Glu adjacent to the leaving group at neutral or slightly basic pH. The proteasome has an ATP-dependent proteolytic activity.</text>
</comment>
<comment type="catalytic activity">
    <reaction>
        <text>Cleavage of peptide bonds with very broad specificity.</text>
        <dbReference type="EC" id="3.4.25.1"/>
    </reaction>
</comment>
<comment type="subunit">
    <text evidence="1">The 26S proteasome consists of a 20S proteasome core and two 19S regulatory subunits. The 20S proteasome core is composed of 28 subunits that are arranged in four stacked rings, resulting in a barrel-shaped structure. The two end rings are each formed by seven alpha subunits, and the two central rings are each formed by seven beta subunits. The catalytic chamber with the active sites is on the inside of the barrel (By similarity).</text>
</comment>
<comment type="subcellular location">
    <subcellularLocation>
        <location evidence="2 3">Cytoplasm</location>
    </subcellularLocation>
    <subcellularLocation>
        <location evidence="3">Nucleus</location>
    </subcellularLocation>
</comment>
<comment type="developmental stage">
    <text evidence="4">Maximally expressed 4-6 hours after starvation (around the aggregation-stream stage), followed by a drastic decrease from the mound to tipped aggregate stage.</text>
</comment>
<comment type="similarity">
    <text evidence="2">Belongs to the peptidase T1B family.</text>
</comment>
<keyword id="KW-0963">Cytoplasm</keyword>
<keyword id="KW-0903">Direct protein sequencing</keyword>
<keyword id="KW-0378">Hydrolase</keyword>
<keyword id="KW-0539">Nucleus</keyword>
<keyword id="KW-0645">Protease</keyword>
<keyword id="KW-0647">Proteasome</keyword>
<keyword id="KW-1185">Reference proteome</keyword>
<keyword id="KW-0888">Threonine protease</keyword>
<keyword id="KW-0865">Zymogen</keyword>
<evidence type="ECO:0000250" key="1"/>
<evidence type="ECO:0000255" key="2">
    <source>
        <dbReference type="PROSITE-ProRule" id="PRU00809"/>
    </source>
</evidence>
<evidence type="ECO:0000269" key="3">
    <source>
    </source>
</evidence>
<evidence type="ECO:0000269" key="4">
    <source>
    </source>
</evidence>
<evidence type="ECO:0000305" key="5"/>
<reference key="1">
    <citation type="journal article" date="1998" name="Biochem. Biophys. Res. Commun.">
        <title>Preferential expression of the cDNA encoding the proteasome subunit during the growth/differentiation transition of Dictyostelium cells.</title>
        <authorList>
            <person name="Chae S.-C."/>
            <person name="Maeda Y."/>
        </authorList>
    </citation>
    <scope>NUCLEOTIDE SEQUENCE [MRNA]</scope>
    <scope>DEVELOPMENTAL STAGE</scope>
    <source>
        <strain>AX2</strain>
    </source>
</reference>
<reference key="2">
    <citation type="journal article" date="2005" name="Nature">
        <title>The genome of the social amoeba Dictyostelium discoideum.</title>
        <authorList>
            <person name="Eichinger L."/>
            <person name="Pachebat J.A."/>
            <person name="Gloeckner G."/>
            <person name="Rajandream M.A."/>
            <person name="Sucgang R."/>
            <person name="Berriman M."/>
            <person name="Song J."/>
            <person name="Olsen R."/>
            <person name="Szafranski K."/>
            <person name="Xu Q."/>
            <person name="Tunggal B."/>
            <person name="Kummerfeld S."/>
            <person name="Madera M."/>
            <person name="Konfortov B.A."/>
            <person name="Rivero F."/>
            <person name="Bankier A.T."/>
            <person name="Lehmann R."/>
            <person name="Hamlin N."/>
            <person name="Davies R."/>
            <person name="Gaudet P."/>
            <person name="Fey P."/>
            <person name="Pilcher K."/>
            <person name="Chen G."/>
            <person name="Saunders D."/>
            <person name="Sodergren E.J."/>
            <person name="Davis P."/>
            <person name="Kerhornou A."/>
            <person name="Nie X."/>
            <person name="Hall N."/>
            <person name="Anjard C."/>
            <person name="Hemphill L."/>
            <person name="Bason N."/>
            <person name="Farbrother P."/>
            <person name="Desany B."/>
            <person name="Just E."/>
            <person name="Morio T."/>
            <person name="Rost R."/>
            <person name="Churcher C.M."/>
            <person name="Cooper J."/>
            <person name="Haydock S."/>
            <person name="van Driessche N."/>
            <person name="Cronin A."/>
            <person name="Goodhead I."/>
            <person name="Muzny D.M."/>
            <person name="Mourier T."/>
            <person name="Pain A."/>
            <person name="Lu M."/>
            <person name="Harper D."/>
            <person name="Lindsay R."/>
            <person name="Hauser H."/>
            <person name="James K.D."/>
            <person name="Quiles M."/>
            <person name="Madan Babu M."/>
            <person name="Saito T."/>
            <person name="Buchrieser C."/>
            <person name="Wardroper A."/>
            <person name="Felder M."/>
            <person name="Thangavelu M."/>
            <person name="Johnson D."/>
            <person name="Knights A."/>
            <person name="Loulseged H."/>
            <person name="Mungall K.L."/>
            <person name="Oliver K."/>
            <person name="Price C."/>
            <person name="Quail M.A."/>
            <person name="Urushihara H."/>
            <person name="Hernandez J."/>
            <person name="Rabbinowitsch E."/>
            <person name="Steffen D."/>
            <person name="Sanders M."/>
            <person name="Ma J."/>
            <person name="Kohara Y."/>
            <person name="Sharp S."/>
            <person name="Simmonds M.N."/>
            <person name="Spiegler S."/>
            <person name="Tivey A."/>
            <person name="Sugano S."/>
            <person name="White B."/>
            <person name="Walker D."/>
            <person name="Woodward J.R."/>
            <person name="Winckler T."/>
            <person name="Tanaka Y."/>
            <person name="Shaulsky G."/>
            <person name="Schleicher M."/>
            <person name="Weinstock G.M."/>
            <person name="Rosenthal A."/>
            <person name="Cox E.C."/>
            <person name="Chisholm R.L."/>
            <person name="Gibbs R.A."/>
            <person name="Loomis W.F."/>
            <person name="Platzer M."/>
            <person name="Kay R.R."/>
            <person name="Williams J.G."/>
            <person name="Dear P.H."/>
            <person name="Noegel A.A."/>
            <person name="Barrell B.G."/>
            <person name="Kuspa A."/>
        </authorList>
    </citation>
    <scope>NUCLEOTIDE SEQUENCE [LARGE SCALE GENOMIC DNA]</scope>
    <source>
        <strain>AX4</strain>
    </source>
</reference>
<reference key="3">
    <citation type="journal article" date="1993" name="J. Struct. Biol.">
        <title>Proteasomes from Dictyostelium discoideum: characterization of structure and function.</title>
        <authorList>
            <person name="Schauer T.M."/>
            <person name="Nesper M."/>
            <person name="Kehl M."/>
            <person name="Lottspeich F."/>
            <person name="Mueller-Taubenberger A."/>
            <person name="Gerisch G."/>
            <person name="Baumeister W."/>
        </authorList>
    </citation>
    <scope>PROTEIN SEQUENCE OF 15-32</scope>
    <scope>FUNCTION</scope>
    <scope>SUBCELLULAR LOCATION</scope>
    <source>
        <strain>AX2</strain>
    </source>
</reference>
<sequence>MEAPEWLDNAVDLGTSIMAVEYDGGVIMGADSRTTTGAYIANRVTNKITPIHERIYCCRSGSAADTQAISDYVRYYLEMHTSELCDEPDVKTAASLFQLLCYSNKNNLMAGIIVAGWDKHQGGSVYNISLGGSMVKQPFAIGGSGSTYIYGYCDSKFKPKMTKDECIEFVQNSLALAMFRDGSSGGVIRLCIIDKNGVERKMIPGNNLPRFWEG</sequence>
<name>PSB6_DICDI</name>
<organism>
    <name type="scientific">Dictyostelium discoideum</name>
    <name type="common">Social amoeba</name>
    <dbReference type="NCBI Taxonomy" id="44689"/>
    <lineage>
        <taxon>Eukaryota</taxon>
        <taxon>Amoebozoa</taxon>
        <taxon>Evosea</taxon>
        <taxon>Eumycetozoa</taxon>
        <taxon>Dictyostelia</taxon>
        <taxon>Dictyosteliales</taxon>
        <taxon>Dictyosteliaceae</taxon>
        <taxon>Dictyostelium</taxon>
    </lineage>
</organism>
<feature type="propeptide" id="PRO_0000327384" description="Removed in mature form" evidence="3">
    <location>
        <begin position="1"/>
        <end position="14"/>
    </location>
</feature>
<feature type="chain" id="PRO_0000327385" description="Proteasome subunit beta type-6">
    <location>
        <begin position="15"/>
        <end position="214"/>
    </location>
</feature>
<feature type="active site" description="Nucleophile" evidence="1">
    <location>
        <position position="15"/>
    </location>
</feature>
<feature type="sequence conflict" description="In Ref. 3; AA sequence." evidence="5" ref="3">
    <original>G</original>
    <variation>R</variation>
    <location>
        <position position="25"/>
    </location>
</feature>
<feature type="sequence conflict" description="In Ref. 3; AA sequence." evidence="5" ref="3">
    <original>M</original>
    <variation>A</variation>
    <location>
        <position position="28"/>
    </location>
</feature>
<feature type="sequence conflict" description="In Ref. 1; BAA25923." evidence="5" ref="1">
    <original>S</original>
    <variation>C</variation>
    <location>
        <position position="95"/>
    </location>
</feature>
<feature type="sequence conflict" description="In Ref. 1; BAA25923." evidence="5" ref="1">
    <location>
        <position position="122"/>
    </location>
</feature>
<feature type="sequence conflict" description="In Ref. 1; BAA25923." evidence="5" ref="1">
    <original>E</original>
    <variation>R</variation>
    <location>
        <position position="165"/>
    </location>
</feature>
<gene>
    <name type="primary">psmB6</name>
    <name type="synonym">dapA</name>
    <name type="ORF">DDB_G0267390</name>
</gene>